<reference key="1">
    <citation type="submission" date="2000-07" db="EMBL/GenBank/DDBJ databases">
        <title>Chloroplast DNA phylogeography of the common beech (Fagus crenata Blume) in Japan.</title>
        <authorList>
            <person name="Fujii N."/>
            <person name="Tomaru N."/>
            <person name="Okuyama K."/>
            <person name="Koike T."/>
            <person name="Mikami T."/>
            <person name="Ueda K."/>
        </authorList>
    </citation>
    <scope>NUCLEOTIDE SEQUENCE [GENOMIC DNA]</scope>
    <source>
        <strain>Haplotype A</strain>
        <strain>Haplotype B</strain>
        <strain>Haplotype C</strain>
        <strain>Haplotype D</strain>
        <strain>Haplotype E</strain>
        <strain>Haplotype F</strain>
        <strain>Haplotype G</strain>
        <strain>Haplotype H</strain>
        <strain>Haplotype I</strain>
        <strain>Haplotype J</strain>
        <strain>Haplotype K</strain>
        <strain>Haplotype L</strain>
        <strain>Haplotype M</strain>
    </source>
</reference>
<reference key="2">
    <citation type="submission" date="2001-04" db="EMBL/GenBank/DDBJ databases">
        <title>Patterns of nucleotide substitution in chloroplast coding and noncoding regions among Japanese oaks (Fagaceae).</title>
        <authorList>
            <person name="Kamiya K."/>
            <person name="Harada K."/>
        </authorList>
    </citation>
    <scope>NUCLEOTIDE SEQUENCE [GENOMIC DNA] OF 41-495</scope>
</reference>
<accession>Q8W8E6</accession>
<accession>Q8W7F1</accession>
<accession>Q8WKE8</accession>
<accession>Q8WKE9</accession>
<accession>Q8WKF0</accession>
<accession>Q8WKF1</accession>
<accession>Q95DH8</accession>
<comment type="function">
    <text evidence="1">Usually encoded in the trnK tRNA gene intron. Probably assists in splicing its own and other chloroplast group II introns.</text>
</comment>
<comment type="subcellular location">
    <subcellularLocation>
        <location>Plastid</location>
        <location>Chloroplast</location>
    </subcellularLocation>
</comment>
<comment type="similarity">
    <text evidence="1">Belongs to the intron maturase 2 family. MatK subfamily.</text>
</comment>
<gene>
    <name evidence="1" type="primary">matK</name>
</gene>
<sequence length="504" mass="59831">MEEFQRYLELDRFRQHDFLYPLLFREYIYALAHDHGFNSYMLLENIGYDNKSSLLIVKRLITRMYQHNYLMISANDSNQNQFFGYNKNLHSQIISEGFAVIVEIPFSLRLISSFEGAEIVISYKLRSIHSIFPFLEDKLPHLNYTTDVRIPYPIHLEILIQTLRSRVKDASYLHLLRFFLHQYSNWNILIITTKSISIFSKSNPRFFLFLYNSHICQYESIFLFLGNQSSHLRLISSGVLFERLYLHKKIEHFAEVFANDFPVIPCFLKDPFMHYVRYQGKSILASKDTPLLMNKWKYYLVNLWQCHFYVWSHPGRIHINQLSKHSLDFWGYFSSVRLNPSVVRSQMLENSFLINNAPKKLDIIVPIIPLIGSLAKARFCNALGHPISKLTRADLSDFEILNRFLRICRNLSHYYSGSSKKKSMYRIKYILRLSCVKTLARKHKSTARAFLKKVGSEFVQEFFTEEEEFLSLIFPRTSFTLRRLYRGRVWYLDIIFINGLANHE</sequence>
<name>MATK_FAGCR</name>
<geneLocation type="chloroplast"/>
<evidence type="ECO:0000255" key="1">
    <source>
        <dbReference type="HAMAP-Rule" id="MF_01390"/>
    </source>
</evidence>
<dbReference type="EMBL" id="AB046492">
    <property type="protein sequence ID" value="BAB83991.1"/>
    <property type="molecule type" value="Genomic_DNA"/>
</dbReference>
<dbReference type="EMBL" id="AB046493">
    <property type="protein sequence ID" value="BAB83992.1"/>
    <property type="molecule type" value="Genomic_DNA"/>
</dbReference>
<dbReference type="EMBL" id="AB046494">
    <property type="protein sequence ID" value="BAB83993.1"/>
    <property type="molecule type" value="Genomic_DNA"/>
</dbReference>
<dbReference type="EMBL" id="AB046495">
    <property type="protein sequence ID" value="BAB83994.1"/>
    <property type="molecule type" value="Genomic_DNA"/>
</dbReference>
<dbReference type="EMBL" id="AB046496">
    <property type="protein sequence ID" value="BAB83995.1"/>
    <property type="molecule type" value="Genomic_DNA"/>
</dbReference>
<dbReference type="EMBL" id="AB046497">
    <property type="protein sequence ID" value="BAB83996.1"/>
    <property type="molecule type" value="Genomic_DNA"/>
</dbReference>
<dbReference type="EMBL" id="AB046498">
    <property type="protein sequence ID" value="BAB83997.1"/>
    <property type="molecule type" value="Genomic_DNA"/>
</dbReference>
<dbReference type="EMBL" id="AB046499">
    <property type="protein sequence ID" value="BAB83998.1"/>
    <property type="molecule type" value="Genomic_DNA"/>
</dbReference>
<dbReference type="EMBL" id="AB046500">
    <property type="protein sequence ID" value="BAB83999.1"/>
    <property type="molecule type" value="Genomic_DNA"/>
</dbReference>
<dbReference type="EMBL" id="AB046501">
    <property type="protein sequence ID" value="BAB84000.1"/>
    <property type="molecule type" value="Genomic_DNA"/>
</dbReference>
<dbReference type="EMBL" id="AB046502">
    <property type="protein sequence ID" value="BAB84001.1"/>
    <property type="molecule type" value="Genomic_DNA"/>
</dbReference>
<dbReference type="EMBL" id="AB046503">
    <property type="protein sequence ID" value="BAB84002.1"/>
    <property type="molecule type" value="Genomic_DNA"/>
</dbReference>
<dbReference type="EMBL" id="AB046504">
    <property type="protein sequence ID" value="BAB84003.1"/>
    <property type="molecule type" value="Genomic_DNA"/>
</dbReference>
<dbReference type="EMBL" id="AB060058">
    <property type="protein sequence ID" value="BAB69837.1"/>
    <property type="molecule type" value="Genomic_DNA"/>
</dbReference>
<dbReference type="GO" id="GO:0009507">
    <property type="term" value="C:chloroplast"/>
    <property type="evidence" value="ECO:0007669"/>
    <property type="project" value="UniProtKB-SubCell"/>
</dbReference>
<dbReference type="GO" id="GO:0003723">
    <property type="term" value="F:RNA binding"/>
    <property type="evidence" value="ECO:0007669"/>
    <property type="project" value="UniProtKB-KW"/>
</dbReference>
<dbReference type="GO" id="GO:0006397">
    <property type="term" value="P:mRNA processing"/>
    <property type="evidence" value="ECO:0007669"/>
    <property type="project" value="UniProtKB-KW"/>
</dbReference>
<dbReference type="GO" id="GO:0008380">
    <property type="term" value="P:RNA splicing"/>
    <property type="evidence" value="ECO:0007669"/>
    <property type="project" value="UniProtKB-UniRule"/>
</dbReference>
<dbReference type="GO" id="GO:0008033">
    <property type="term" value="P:tRNA processing"/>
    <property type="evidence" value="ECO:0007669"/>
    <property type="project" value="UniProtKB-KW"/>
</dbReference>
<dbReference type="HAMAP" id="MF_01390">
    <property type="entry name" value="MatK"/>
    <property type="match status" value="1"/>
</dbReference>
<dbReference type="InterPro" id="IPR024937">
    <property type="entry name" value="Domain_X"/>
</dbReference>
<dbReference type="InterPro" id="IPR002866">
    <property type="entry name" value="Maturase_MatK"/>
</dbReference>
<dbReference type="InterPro" id="IPR024942">
    <property type="entry name" value="Maturase_MatK_N"/>
</dbReference>
<dbReference type="PANTHER" id="PTHR34811">
    <property type="entry name" value="MATURASE K"/>
    <property type="match status" value="1"/>
</dbReference>
<dbReference type="PANTHER" id="PTHR34811:SF1">
    <property type="entry name" value="MATURASE K"/>
    <property type="match status" value="1"/>
</dbReference>
<dbReference type="Pfam" id="PF01348">
    <property type="entry name" value="Intron_maturas2"/>
    <property type="match status" value="1"/>
</dbReference>
<dbReference type="Pfam" id="PF01824">
    <property type="entry name" value="MatK_N"/>
    <property type="match status" value="1"/>
</dbReference>
<proteinExistence type="inferred from homology"/>
<keyword id="KW-0150">Chloroplast</keyword>
<keyword id="KW-0507">mRNA processing</keyword>
<keyword id="KW-0934">Plastid</keyword>
<keyword id="KW-0694">RNA-binding</keyword>
<keyword id="KW-0819">tRNA processing</keyword>
<feature type="chain" id="PRO_0000143385" description="Maturase K">
    <location>
        <begin position="1"/>
        <end position="504"/>
    </location>
</feature>
<feature type="sequence variant" description="In haplotypes F, G and H.">
    <original>M</original>
    <variation>T</variation>
    <location>
        <position position="41"/>
    </location>
</feature>
<feature type="sequence variant" description="In haplotype A.">
    <original>P</original>
    <variation>T</variation>
    <location>
        <position position="340"/>
    </location>
</feature>
<feature type="sequence variant" description="In haplotype G.">
    <original>L</original>
    <variation>F</variation>
    <location>
        <position position="451"/>
    </location>
</feature>
<feature type="sequence variant" description="In haplotypes K and L.">
    <original>T</original>
    <variation>S</variation>
    <location>
        <position position="477"/>
    </location>
</feature>
<protein>
    <recommendedName>
        <fullName evidence="1">Maturase K</fullName>
    </recommendedName>
    <alternativeName>
        <fullName evidence="1">Intron maturase</fullName>
    </alternativeName>
</protein>
<organism>
    <name type="scientific">Fagus crenata</name>
    <name type="common">Japanese beech</name>
    <dbReference type="NCBI Taxonomy" id="28929"/>
    <lineage>
        <taxon>Eukaryota</taxon>
        <taxon>Viridiplantae</taxon>
        <taxon>Streptophyta</taxon>
        <taxon>Embryophyta</taxon>
        <taxon>Tracheophyta</taxon>
        <taxon>Spermatophyta</taxon>
        <taxon>Magnoliopsida</taxon>
        <taxon>eudicotyledons</taxon>
        <taxon>Gunneridae</taxon>
        <taxon>Pentapetalae</taxon>
        <taxon>rosids</taxon>
        <taxon>fabids</taxon>
        <taxon>Fagales</taxon>
        <taxon>Fagaceae</taxon>
        <taxon>Fagus</taxon>
    </lineage>
</organism>